<proteinExistence type="inferred from homology"/>
<comment type="catalytic activity">
    <reaction evidence="1">
        <text>5-amino-1-(5-phospho-D-ribosyl)imidazole-4-carboxylate + L-aspartate + ATP = (2S)-2-[5-amino-1-(5-phospho-beta-D-ribosyl)imidazole-4-carboxamido]succinate + ADP + phosphate + 2 H(+)</text>
        <dbReference type="Rhea" id="RHEA:22628"/>
        <dbReference type="ChEBI" id="CHEBI:15378"/>
        <dbReference type="ChEBI" id="CHEBI:29991"/>
        <dbReference type="ChEBI" id="CHEBI:30616"/>
        <dbReference type="ChEBI" id="CHEBI:43474"/>
        <dbReference type="ChEBI" id="CHEBI:58443"/>
        <dbReference type="ChEBI" id="CHEBI:77657"/>
        <dbReference type="ChEBI" id="CHEBI:456216"/>
        <dbReference type="EC" id="6.3.2.6"/>
    </reaction>
</comment>
<comment type="pathway">
    <text evidence="1">Purine metabolism; IMP biosynthesis via de novo pathway; 5-amino-1-(5-phospho-D-ribosyl)imidazole-4-carboxamide from 5-amino-1-(5-phospho-D-ribosyl)imidazole-4-carboxylate: step 1/2.</text>
</comment>
<comment type="similarity">
    <text evidence="1">Belongs to the SAICAR synthetase family.</text>
</comment>
<organism>
    <name type="scientific">Listeria monocytogenes serotype 4a (strain HCC23)</name>
    <dbReference type="NCBI Taxonomy" id="552536"/>
    <lineage>
        <taxon>Bacteria</taxon>
        <taxon>Bacillati</taxon>
        <taxon>Bacillota</taxon>
        <taxon>Bacilli</taxon>
        <taxon>Bacillales</taxon>
        <taxon>Listeriaceae</taxon>
        <taxon>Listeria</taxon>
    </lineage>
</organism>
<accession>B8DDY5</accession>
<protein>
    <recommendedName>
        <fullName evidence="1">Phosphoribosylaminoimidazole-succinocarboxamide synthase</fullName>
        <ecNumber evidence="1">6.3.2.6</ecNumber>
    </recommendedName>
    <alternativeName>
        <fullName evidence="1">SAICAR synthetase</fullName>
    </alternativeName>
</protein>
<sequence length="237" mass="26850">MTNELVYEGKAKRLFKTEEAGVLRVAYKDDATALNGVRKESFAGKGELNNQITSLIFSHLAEAGIESHFIRAISETEQLVKEVSIIPLEVVVRNVMAGSLAKRLGKEEGEPIPNAIVEFYFKEDALDDPFINDDHVLYLEIATTNEMDEIRQAARSINKVLQELFTQMNITLIDFKLEFGRDAAGNILLADEISPDTCRLWDKETNQKLDKDVFRRNIGNLTDVYTEVLNRLKQVQN</sequence>
<name>PUR7_LISMH</name>
<evidence type="ECO:0000255" key="1">
    <source>
        <dbReference type="HAMAP-Rule" id="MF_00137"/>
    </source>
</evidence>
<gene>
    <name evidence="1" type="primary">purC</name>
    <name type="ordered locus">LMHCC_0792</name>
</gene>
<feature type="chain" id="PRO_1000122918" description="Phosphoribosylaminoimidazole-succinocarboxamide synthase">
    <location>
        <begin position="1"/>
        <end position="237"/>
    </location>
</feature>
<dbReference type="EC" id="6.3.2.6" evidence="1"/>
<dbReference type="EMBL" id="CP001175">
    <property type="protein sequence ID" value="ACK39144.1"/>
    <property type="molecule type" value="Genomic_DNA"/>
</dbReference>
<dbReference type="RefSeq" id="WP_012581147.1">
    <property type="nucleotide sequence ID" value="NC_011660.1"/>
</dbReference>
<dbReference type="SMR" id="B8DDY5"/>
<dbReference type="KEGG" id="lmh:LMHCC_0792"/>
<dbReference type="HOGENOM" id="CLU_061495_2_0_9"/>
<dbReference type="UniPathway" id="UPA00074">
    <property type="reaction ID" value="UER00131"/>
</dbReference>
<dbReference type="GO" id="GO:0005524">
    <property type="term" value="F:ATP binding"/>
    <property type="evidence" value="ECO:0007669"/>
    <property type="project" value="UniProtKB-KW"/>
</dbReference>
<dbReference type="GO" id="GO:0004639">
    <property type="term" value="F:phosphoribosylaminoimidazolesuccinocarboxamide synthase activity"/>
    <property type="evidence" value="ECO:0007669"/>
    <property type="project" value="UniProtKB-UniRule"/>
</dbReference>
<dbReference type="GO" id="GO:0006189">
    <property type="term" value="P:'de novo' IMP biosynthetic process"/>
    <property type="evidence" value="ECO:0007669"/>
    <property type="project" value="UniProtKB-UniRule"/>
</dbReference>
<dbReference type="GO" id="GO:0009236">
    <property type="term" value="P:cobalamin biosynthetic process"/>
    <property type="evidence" value="ECO:0007669"/>
    <property type="project" value="InterPro"/>
</dbReference>
<dbReference type="CDD" id="cd01415">
    <property type="entry name" value="SAICAR_synt_PurC"/>
    <property type="match status" value="1"/>
</dbReference>
<dbReference type="FunFam" id="3.30.470.20:FF:000006">
    <property type="entry name" value="Phosphoribosylaminoimidazole-succinocarboxamide synthase"/>
    <property type="match status" value="1"/>
</dbReference>
<dbReference type="Gene3D" id="3.30.470.20">
    <property type="entry name" value="ATP-grasp fold, B domain"/>
    <property type="match status" value="1"/>
</dbReference>
<dbReference type="Gene3D" id="3.30.200.20">
    <property type="entry name" value="Phosphorylase Kinase, domain 1"/>
    <property type="match status" value="1"/>
</dbReference>
<dbReference type="HAMAP" id="MF_00137">
    <property type="entry name" value="SAICAR_synth"/>
    <property type="match status" value="1"/>
</dbReference>
<dbReference type="InterPro" id="IPR028923">
    <property type="entry name" value="SAICAR_synt/ADE2_N"/>
</dbReference>
<dbReference type="InterPro" id="IPR033934">
    <property type="entry name" value="SAICAR_synt_PurC"/>
</dbReference>
<dbReference type="InterPro" id="IPR001636">
    <property type="entry name" value="SAICAR_synth"/>
</dbReference>
<dbReference type="InterPro" id="IPR050089">
    <property type="entry name" value="SAICAR_synthetase"/>
</dbReference>
<dbReference type="InterPro" id="IPR018236">
    <property type="entry name" value="SAICAR_synthetase_CS"/>
</dbReference>
<dbReference type="NCBIfam" id="TIGR00081">
    <property type="entry name" value="purC"/>
    <property type="match status" value="1"/>
</dbReference>
<dbReference type="PANTHER" id="PTHR43599">
    <property type="entry name" value="MULTIFUNCTIONAL PROTEIN ADE2"/>
    <property type="match status" value="1"/>
</dbReference>
<dbReference type="PANTHER" id="PTHR43599:SF3">
    <property type="entry name" value="SI:DKEY-6E2.2"/>
    <property type="match status" value="1"/>
</dbReference>
<dbReference type="Pfam" id="PF01259">
    <property type="entry name" value="SAICAR_synt"/>
    <property type="match status" value="1"/>
</dbReference>
<dbReference type="SUPFAM" id="SSF56104">
    <property type="entry name" value="SAICAR synthase-like"/>
    <property type="match status" value="1"/>
</dbReference>
<dbReference type="PROSITE" id="PS01057">
    <property type="entry name" value="SAICAR_SYNTHETASE_1"/>
    <property type="match status" value="1"/>
</dbReference>
<dbReference type="PROSITE" id="PS01058">
    <property type="entry name" value="SAICAR_SYNTHETASE_2"/>
    <property type="match status" value="1"/>
</dbReference>
<keyword id="KW-0067">ATP-binding</keyword>
<keyword id="KW-0436">Ligase</keyword>
<keyword id="KW-0547">Nucleotide-binding</keyword>
<keyword id="KW-0658">Purine biosynthesis</keyword>
<reference key="1">
    <citation type="journal article" date="2011" name="J. Bacteriol.">
        <title>Genome sequence of lineage III Listeria monocytogenes strain HCC23.</title>
        <authorList>
            <person name="Steele C.L."/>
            <person name="Donaldson J.R."/>
            <person name="Paul D."/>
            <person name="Banes M.M."/>
            <person name="Arick T."/>
            <person name="Bridges S.M."/>
            <person name="Lawrence M.L."/>
        </authorList>
    </citation>
    <scope>NUCLEOTIDE SEQUENCE [LARGE SCALE GENOMIC DNA]</scope>
    <source>
        <strain>HCC23</strain>
    </source>
</reference>